<feature type="chain" id="PRO_0000065171" description="Uncharacterized protein C09G1.4">
    <location>
        <begin position="1"/>
        <end position="545"/>
    </location>
</feature>
<feature type="domain" description="PDZ" evidence="1">
    <location>
        <begin position="458"/>
        <end position="540"/>
    </location>
</feature>
<feature type="region of interest" description="Disordered" evidence="2">
    <location>
        <begin position="1"/>
        <end position="162"/>
    </location>
</feature>
<feature type="region of interest" description="Disordered" evidence="2">
    <location>
        <begin position="200"/>
        <end position="250"/>
    </location>
</feature>
<feature type="compositionally biased region" description="Polar residues" evidence="2">
    <location>
        <begin position="86"/>
        <end position="100"/>
    </location>
</feature>
<feature type="compositionally biased region" description="Low complexity" evidence="2">
    <location>
        <begin position="109"/>
        <end position="128"/>
    </location>
</feature>
<feature type="compositionally biased region" description="Low complexity" evidence="2">
    <location>
        <begin position="141"/>
        <end position="152"/>
    </location>
</feature>
<feature type="compositionally biased region" description="Polar residues" evidence="2">
    <location>
        <begin position="212"/>
        <end position="221"/>
    </location>
</feature>
<feature type="compositionally biased region" description="Polar residues" evidence="2">
    <location>
        <begin position="228"/>
        <end position="244"/>
    </location>
</feature>
<keyword id="KW-1185">Reference proteome</keyword>
<gene>
    <name type="ORF">C09G1.4</name>
</gene>
<protein>
    <recommendedName>
        <fullName>Uncharacterized protein C09G1.4</fullName>
    </recommendedName>
</protein>
<name>YTE4_CAEEL</name>
<accession>Q17865</accession>
<proteinExistence type="evidence at protein level"/>
<evidence type="ECO:0000255" key="1">
    <source>
        <dbReference type="PROSITE-ProRule" id="PRU00143"/>
    </source>
</evidence>
<evidence type="ECO:0000256" key="2">
    <source>
        <dbReference type="SAM" id="MobiDB-lite"/>
    </source>
</evidence>
<comment type="interaction">
    <interactant intactId="EBI-317562">
        <id>Q17865</id>
    </interactant>
    <interactant intactId="EBI-316352">
        <id>G5EFL5</id>
        <label>alp-1</label>
    </interactant>
    <organismsDiffer>false</organismsDiffer>
    <experiments>3</experiments>
</comment>
<comment type="interaction">
    <interactant intactId="EBI-317562">
        <id>Q17865</id>
    </interactant>
    <interactant intactId="EBI-326852">
        <id>H2KYD4</id>
        <label>CELE_F57C9.4</label>
    </interactant>
    <organismsDiffer>false</organismsDiffer>
    <experiments>4</experiments>
</comment>
<comment type="interaction">
    <interactant intactId="EBI-317562">
        <id>Q17865</id>
    </interactant>
    <interactant intactId="EBI-2315822">
        <id>Q7K7J0</id>
        <label>gei-18</label>
    </interactant>
    <organismsDiffer>false</organismsDiffer>
    <experiments>5</experiments>
</comment>
<comment type="interaction">
    <interactant intactId="EBI-317562">
        <id>Q17865</id>
    </interactant>
    <interactant intactId="EBI-6538150">
        <id>Q9N415</id>
        <label>rimb-1</label>
    </interactant>
    <organismsDiffer>false</organismsDiffer>
    <experiments>6</experiments>
</comment>
<comment type="interaction">
    <interactant intactId="EBI-317562">
        <id>Q17865</id>
    </interactant>
    <interactant intactId="EBI-325337">
        <id>G5EC32</id>
        <label>sorb-1</label>
    </interactant>
    <organismsDiffer>false</organismsDiffer>
    <experiments>5</experiments>
</comment>
<comment type="interaction">
    <interactant intactId="EBI-317562">
        <id>Q17865</id>
    </interactant>
    <interactant intactId="EBI-2315635">
        <id>Q8MPT2</id>
        <label>T04C9.1</label>
    </interactant>
    <organismsDiffer>false</organismsDiffer>
    <experiments>6</experiments>
</comment>
<comment type="interaction">
    <interactant intactId="EBI-317562">
        <id>Q17865</id>
    </interactant>
    <interactant intactId="EBI-311986">
        <id>G5EGG0</id>
        <label>uso-1</label>
    </interactant>
    <organismsDiffer>false</organismsDiffer>
    <experiments>4</experiments>
</comment>
<reference key="1">
    <citation type="journal article" date="1998" name="Science">
        <title>Genome sequence of the nematode C. elegans: a platform for investigating biology.</title>
        <authorList>
            <consortium name="The C. elegans sequencing consortium"/>
        </authorList>
    </citation>
    <scope>NUCLEOTIDE SEQUENCE [LARGE SCALE GENOMIC DNA]</scope>
    <source>
        <strain>Bristol N2</strain>
    </source>
</reference>
<sequence length="545" mass="60171">MSSGNRQAPMPPPKPRNLGRGQFYQQGGYLTPQDSDTDSGISADCDQGSPRAAAGFGGTGFNGTVNGQQVNSQRRIPDLPPGAYQNYRSHSSADYLTPNSARKIASYSTTPRRLPLQPQQQAPATATKAKYRVRFADEVDSGASTSSGTSSTHISPRNDPQEMLMNSAVGAPQITSTFQQPASYMQNSSDAQYKMNKIEYPPVSRTPPVACSSRTGTLQRTPNRRLPISSTPQPQPTYADQMQSLPEPPPYTIAMQRLRSVEQQPQESFRDAFIRKSVNDTLQRRYRQRSSSLPRGNKSYYEGIDIYDAQPPIRPLPQQQTSLMTVANQLPGSLDNLHINNLNMRRRKLPTAPLMGSSCQLHLDNSDELTAYRALQFQMMQDELQRQQPPPQSFERPTLLRRTNMPQQQSFNIPHITTTGPPPPAMGLSVPVQYDQGEYGTQSVRAQLVALDQRGFRRVLVEKMMPGPFGFYIATGVVAGQRAGIFISRVSLPSLSPMLTVGDEIIYVDEEYVKGRSLEYVQSVIAGKTSVTITLLPAVGQPAIC</sequence>
<organism>
    <name type="scientific">Caenorhabditis elegans</name>
    <dbReference type="NCBI Taxonomy" id="6239"/>
    <lineage>
        <taxon>Eukaryota</taxon>
        <taxon>Metazoa</taxon>
        <taxon>Ecdysozoa</taxon>
        <taxon>Nematoda</taxon>
        <taxon>Chromadorea</taxon>
        <taxon>Rhabditida</taxon>
        <taxon>Rhabditina</taxon>
        <taxon>Rhabditomorpha</taxon>
        <taxon>Rhabditoidea</taxon>
        <taxon>Rhabditidae</taxon>
        <taxon>Peloderinae</taxon>
        <taxon>Caenorhabditis</taxon>
    </lineage>
</organism>
<dbReference type="EMBL" id="Z50176">
    <property type="protein sequence ID" value="CAA90541.2"/>
    <property type="molecule type" value="Genomic_DNA"/>
</dbReference>
<dbReference type="PIR" id="T19139">
    <property type="entry name" value="T19139"/>
</dbReference>
<dbReference type="RefSeq" id="NP_510621.2">
    <property type="nucleotide sequence ID" value="NM_078220.7"/>
</dbReference>
<dbReference type="SMR" id="Q17865"/>
<dbReference type="BioGRID" id="46568">
    <property type="interactions" value="43"/>
</dbReference>
<dbReference type="DIP" id="DIP-25627N"/>
<dbReference type="FunCoup" id="Q17865">
    <property type="interactions" value="4"/>
</dbReference>
<dbReference type="IntAct" id="Q17865">
    <property type="interactions" value="41"/>
</dbReference>
<dbReference type="STRING" id="6239.C09G1.4.1"/>
<dbReference type="PaxDb" id="6239-C09G1.4"/>
<dbReference type="EnsemblMetazoa" id="C09G1.4.1">
    <property type="protein sequence ID" value="C09G1.4.1"/>
    <property type="gene ID" value="WBGene00007486"/>
</dbReference>
<dbReference type="EnsemblMetazoa" id="C09G1.4.2">
    <property type="protein sequence ID" value="C09G1.4.2"/>
    <property type="gene ID" value="WBGene00007486"/>
</dbReference>
<dbReference type="GeneID" id="181679"/>
<dbReference type="KEGG" id="cel:CELE_C09G1.4"/>
<dbReference type="UCSC" id="C09G1.4">
    <property type="organism name" value="c. elegans"/>
</dbReference>
<dbReference type="AGR" id="WB:WBGene00007486"/>
<dbReference type="CTD" id="181679"/>
<dbReference type="WormBase" id="C09G1.4">
    <property type="protein sequence ID" value="CE43135"/>
    <property type="gene ID" value="WBGene00007486"/>
</dbReference>
<dbReference type="eggNOG" id="ENOG502SPAY">
    <property type="taxonomic scope" value="Eukaryota"/>
</dbReference>
<dbReference type="HOGENOM" id="CLU_514122_0_0_1"/>
<dbReference type="InParanoid" id="Q17865"/>
<dbReference type="OMA" id="LVEKMMP"/>
<dbReference type="OrthoDB" id="10058001at2759"/>
<dbReference type="Reactome" id="R-CEL-9013424">
    <property type="pathway name" value="RHOV GTPase cycle"/>
</dbReference>
<dbReference type="PRO" id="PR:Q17865"/>
<dbReference type="Proteomes" id="UP000001940">
    <property type="component" value="Chromosome X"/>
</dbReference>
<dbReference type="Bgee" id="WBGene00007486">
    <property type="expression patterns" value="Expressed in larva and 3 other cell types or tissues"/>
</dbReference>
<dbReference type="GO" id="GO:0007098">
    <property type="term" value="P:centrosome cycle"/>
    <property type="evidence" value="ECO:0000318"/>
    <property type="project" value="GO_Central"/>
</dbReference>
<dbReference type="Gene3D" id="2.30.42.10">
    <property type="match status" value="1"/>
</dbReference>
<dbReference type="InterPro" id="IPR051741">
    <property type="entry name" value="PAR6_homolog"/>
</dbReference>
<dbReference type="InterPro" id="IPR001478">
    <property type="entry name" value="PDZ"/>
</dbReference>
<dbReference type="InterPro" id="IPR036034">
    <property type="entry name" value="PDZ_sf"/>
</dbReference>
<dbReference type="PANTHER" id="PTHR14102">
    <property type="entry name" value="PAR-6-RELATED"/>
    <property type="match status" value="1"/>
</dbReference>
<dbReference type="PANTHER" id="PTHR14102:SF14">
    <property type="entry name" value="PROTEIN CBG16414"/>
    <property type="match status" value="1"/>
</dbReference>
<dbReference type="SMART" id="SM00228">
    <property type="entry name" value="PDZ"/>
    <property type="match status" value="1"/>
</dbReference>
<dbReference type="SUPFAM" id="SSF50156">
    <property type="entry name" value="PDZ domain-like"/>
    <property type="match status" value="1"/>
</dbReference>
<dbReference type="PROSITE" id="PS50106">
    <property type="entry name" value="PDZ"/>
    <property type="match status" value="1"/>
</dbReference>